<proteinExistence type="inferred from homology"/>
<keyword id="KW-0489">Methyltransferase</keyword>
<keyword id="KW-1185">Reference proteome</keyword>
<keyword id="KW-0808">Transferase</keyword>
<organism>
    <name type="scientific">Mycoplasma genitalium (strain ATCC 33530 / DSM 19775 / NCTC 10195 / G37)</name>
    <name type="common">Mycoplasmoides genitalium</name>
    <dbReference type="NCBI Taxonomy" id="243273"/>
    <lineage>
        <taxon>Bacteria</taxon>
        <taxon>Bacillati</taxon>
        <taxon>Mycoplasmatota</taxon>
        <taxon>Mycoplasmoidales</taxon>
        <taxon>Mycoplasmoidaceae</taxon>
        <taxon>Mycoplasmoides</taxon>
    </lineage>
</organism>
<accession>P47494</accession>
<comment type="similarity">
    <text evidence="2">Belongs to the class IV-like SAM-binding methyltransferase superfamily. RNA methyltransferase TrmH family.</text>
</comment>
<evidence type="ECO:0000250" key="1"/>
<evidence type="ECO:0000305" key="2"/>
<name>Y252_MYCGE</name>
<feature type="chain" id="PRO_0000159833" description="Uncharacterized tRNA/rRNA methyltransferase MG252">
    <location>
        <begin position="1"/>
        <end position="242"/>
    </location>
</feature>
<feature type="binding site" evidence="1">
    <location>
        <position position="198"/>
    </location>
    <ligand>
        <name>S-adenosyl-L-methionine</name>
        <dbReference type="ChEBI" id="CHEBI:59789"/>
    </ligand>
</feature>
<feature type="binding site" evidence="1">
    <location>
        <position position="218"/>
    </location>
    <ligand>
        <name>S-adenosyl-L-methionine</name>
        <dbReference type="ChEBI" id="CHEBI:59789"/>
    </ligand>
</feature>
<feature type="binding site" evidence="1">
    <location>
        <position position="227"/>
    </location>
    <ligand>
        <name>S-adenosyl-L-methionine</name>
        <dbReference type="ChEBI" id="CHEBI:59789"/>
    </ligand>
</feature>
<sequence>MKKPRQQSCLFGVKAFEEAINNQVHIKLVNISIRHKKLIPLIEAKKINFQIHSTNWFNNQYRDINHQELVAVLDTNQLLIPLDQLVKVVENKKCSTLVMLDEIQDPYNFGAILRTCLASEVDGIIFKKNNQVPINNTVMKTSMGSVFYQNLVQVANLSYTITKLKEIGFWTVVSTLDPIWKPIDYRKVDFAKKILIVGNEDRGVNQLITKNADCRIKIPMNNKINSLNVSVALGIILFAWKN</sequence>
<gene>
    <name type="ordered locus">MG252</name>
</gene>
<protein>
    <recommendedName>
        <fullName>Uncharacterized tRNA/rRNA methyltransferase MG252</fullName>
        <ecNumber>2.1.1.-</ecNumber>
    </recommendedName>
</protein>
<dbReference type="EC" id="2.1.1.-"/>
<dbReference type="EMBL" id="L43967">
    <property type="protein sequence ID" value="AAC71472.1"/>
    <property type="molecule type" value="Genomic_DNA"/>
</dbReference>
<dbReference type="PIR" id="H64227">
    <property type="entry name" value="H64227"/>
</dbReference>
<dbReference type="RefSeq" id="WP_010869393.1">
    <property type="nucleotide sequence ID" value="NC_000908.2"/>
</dbReference>
<dbReference type="SMR" id="P47494"/>
<dbReference type="FunCoup" id="P47494">
    <property type="interactions" value="177"/>
</dbReference>
<dbReference type="STRING" id="243273.MG_252"/>
<dbReference type="GeneID" id="88282398"/>
<dbReference type="KEGG" id="mge:MG_252"/>
<dbReference type="eggNOG" id="COG0566">
    <property type="taxonomic scope" value="Bacteria"/>
</dbReference>
<dbReference type="HOGENOM" id="CLU_021322_0_1_14"/>
<dbReference type="InParanoid" id="P47494"/>
<dbReference type="OrthoDB" id="9794400at2"/>
<dbReference type="BioCyc" id="MGEN243273:G1GJ2-299-MONOMER"/>
<dbReference type="Proteomes" id="UP000000807">
    <property type="component" value="Chromosome"/>
</dbReference>
<dbReference type="GO" id="GO:0005737">
    <property type="term" value="C:cytoplasm"/>
    <property type="evidence" value="ECO:0007669"/>
    <property type="project" value="UniProtKB-ARBA"/>
</dbReference>
<dbReference type="GO" id="GO:0003723">
    <property type="term" value="F:RNA binding"/>
    <property type="evidence" value="ECO:0007669"/>
    <property type="project" value="InterPro"/>
</dbReference>
<dbReference type="GO" id="GO:0008173">
    <property type="term" value="F:RNA methyltransferase activity"/>
    <property type="evidence" value="ECO:0007669"/>
    <property type="project" value="InterPro"/>
</dbReference>
<dbReference type="GO" id="GO:0032259">
    <property type="term" value="P:methylation"/>
    <property type="evidence" value="ECO:0007669"/>
    <property type="project" value="UniProtKB-KW"/>
</dbReference>
<dbReference type="GO" id="GO:0006396">
    <property type="term" value="P:RNA processing"/>
    <property type="evidence" value="ECO:0007669"/>
    <property type="project" value="InterPro"/>
</dbReference>
<dbReference type="CDD" id="cd18103">
    <property type="entry name" value="SpoU-like_RlmB"/>
    <property type="match status" value="1"/>
</dbReference>
<dbReference type="Gene3D" id="3.40.1280.10">
    <property type="match status" value="1"/>
</dbReference>
<dbReference type="InterPro" id="IPR029028">
    <property type="entry name" value="Alpha/beta_knot_MTases"/>
</dbReference>
<dbReference type="InterPro" id="IPR004441">
    <property type="entry name" value="rRNA_MeTrfase_TrmH"/>
</dbReference>
<dbReference type="InterPro" id="IPR001537">
    <property type="entry name" value="SpoU_MeTrfase"/>
</dbReference>
<dbReference type="InterPro" id="IPR013123">
    <property type="entry name" value="SpoU_subst-bd"/>
</dbReference>
<dbReference type="InterPro" id="IPR029026">
    <property type="entry name" value="tRNA_m1G_MTases_N"/>
</dbReference>
<dbReference type="NCBIfam" id="TIGR00186">
    <property type="entry name" value="rRNA_methyl_3"/>
    <property type="match status" value="1"/>
</dbReference>
<dbReference type="PANTHER" id="PTHR46429">
    <property type="entry name" value="23S RRNA (GUANOSINE-2'-O-)-METHYLTRANSFERASE RLMB"/>
    <property type="match status" value="1"/>
</dbReference>
<dbReference type="PANTHER" id="PTHR46429:SF1">
    <property type="entry name" value="23S RRNA (GUANOSINE-2'-O-)-METHYLTRANSFERASE RLMB"/>
    <property type="match status" value="1"/>
</dbReference>
<dbReference type="Pfam" id="PF00588">
    <property type="entry name" value="SpoU_methylase"/>
    <property type="match status" value="1"/>
</dbReference>
<dbReference type="Pfam" id="PF08032">
    <property type="entry name" value="SpoU_sub_bind"/>
    <property type="match status" value="1"/>
</dbReference>
<dbReference type="SUPFAM" id="SSF75217">
    <property type="entry name" value="alpha/beta knot"/>
    <property type="match status" value="1"/>
</dbReference>
<reference key="1">
    <citation type="journal article" date="1995" name="Science">
        <title>The minimal gene complement of Mycoplasma genitalium.</title>
        <authorList>
            <person name="Fraser C.M."/>
            <person name="Gocayne J.D."/>
            <person name="White O."/>
            <person name="Adams M.D."/>
            <person name="Clayton R.A."/>
            <person name="Fleischmann R.D."/>
            <person name="Bult C.J."/>
            <person name="Kerlavage A.R."/>
            <person name="Sutton G.G."/>
            <person name="Kelley J.M."/>
            <person name="Fritchman J.L."/>
            <person name="Weidman J.F."/>
            <person name="Small K.V."/>
            <person name="Sandusky M."/>
            <person name="Fuhrmann J.L."/>
            <person name="Nguyen D.T."/>
            <person name="Utterback T.R."/>
            <person name="Saudek D.M."/>
            <person name="Phillips C.A."/>
            <person name="Merrick J.M."/>
            <person name="Tomb J.-F."/>
            <person name="Dougherty B.A."/>
            <person name="Bott K.F."/>
            <person name="Hu P.-C."/>
            <person name="Lucier T.S."/>
            <person name="Peterson S.N."/>
            <person name="Smith H.O."/>
            <person name="Hutchison C.A. III"/>
            <person name="Venter J.C."/>
        </authorList>
    </citation>
    <scope>NUCLEOTIDE SEQUENCE [LARGE SCALE GENOMIC DNA]</scope>
    <source>
        <strain>ATCC 33530 / DSM 19775 / NCTC 10195 / G37</strain>
    </source>
</reference>